<gene>
    <name evidence="1" type="primary">cynS</name>
    <name type="ordered locus">Bcenmc03_4127</name>
</gene>
<organism>
    <name type="scientific">Burkholderia orbicola (strain MC0-3)</name>
    <dbReference type="NCBI Taxonomy" id="406425"/>
    <lineage>
        <taxon>Bacteria</taxon>
        <taxon>Pseudomonadati</taxon>
        <taxon>Pseudomonadota</taxon>
        <taxon>Betaproteobacteria</taxon>
        <taxon>Burkholderiales</taxon>
        <taxon>Burkholderiaceae</taxon>
        <taxon>Burkholderia</taxon>
        <taxon>Burkholderia cepacia complex</taxon>
        <taxon>Burkholderia orbicola</taxon>
    </lineage>
</organism>
<name>CYNS_BURO0</name>
<comment type="function">
    <text evidence="1">Catalyzes the reaction of cyanate with bicarbonate to produce ammonia and carbon dioxide.</text>
</comment>
<comment type="catalytic activity">
    <reaction evidence="1">
        <text>cyanate + hydrogencarbonate + 3 H(+) = NH4(+) + 2 CO2</text>
        <dbReference type="Rhea" id="RHEA:11120"/>
        <dbReference type="ChEBI" id="CHEBI:15378"/>
        <dbReference type="ChEBI" id="CHEBI:16526"/>
        <dbReference type="ChEBI" id="CHEBI:17544"/>
        <dbReference type="ChEBI" id="CHEBI:28938"/>
        <dbReference type="ChEBI" id="CHEBI:29195"/>
        <dbReference type="EC" id="4.2.1.104"/>
    </reaction>
</comment>
<comment type="similarity">
    <text evidence="1">Belongs to the cyanase family.</text>
</comment>
<dbReference type="EC" id="4.2.1.104" evidence="1"/>
<dbReference type="EMBL" id="CP000959">
    <property type="protein sequence ID" value="ACA93278.1"/>
    <property type="molecule type" value="Genomic_DNA"/>
</dbReference>
<dbReference type="RefSeq" id="WP_011548409.1">
    <property type="nucleotide sequence ID" value="NC_010515.1"/>
</dbReference>
<dbReference type="SMR" id="B1K759"/>
<dbReference type="GeneID" id="83050891"/>
<dbReference type="KEGG" id="bcm:Bcenmc03_4127"/>
<dbReference type="HOGENOM" id="CLU_103452_1_1_4"/>
<dbReference type="Proteomes" id="UP000002169">
    <property type="component" value="Chromosome 2"/>
</dbReference>
<dbReference type="GO" id="GO:0008824">
    <property type="term" value="F:cyanate hydratase activity"/>
    <property type="evidence" value="ECO:0007669"/>
    <property type="project" value="UniProtKB-UniRule"/>
</dbReference>
<dbReference type="GO" id="GO:0003677">
    <property type="term" value="F:DNA binding"/>
    <property type="evidence" value="ECO:0007669"/>
    <property type="project" value="InterPro"/>
</dbReference>
<dbReference type="GO" id="GO:0009439">
    <property type="term" value="P:cyanate metabolic process"/>
    <property type="evidence" value="ECO:0007669"/>
    <property type="project" value="UniProtKB-UniRule"/>
</dbReference>
<dbReference type="CDD" id="cd00559">
    <property type="entry name" value="Cyanase_C"/>
    <property type="match status" value="1"/>
</dbReference>
<dbReference type="FunFam" id="3.30.1160.10:FF:000001">
    <property type="entry name" value="Cyanate hydratase"/>
    <property type="match status" value="1"/>
</dbReference>
<dbReference type="Gene3D" id="3.30.1160.10">
    <property type="entry name" value="Cyanate lyase, C-terminal domain"/>
    <property type="match status" value="1"/>
</dbReference>
<dbReference type="Gene3D" id="1.10.260.40">
    <property type="entry name" value="lambda repressor-like DNA-binding domains"/>
    <property type="match status" value="1"/>
</dbReference>
<dbReference type="HAMAP" id="MF_00535">
    <property type="entry name" value="Cyanate_hydrat"/>
    <property type="match status" value="1"/>
</dbReference>
<dbReference type="InterPro" id="IPR008076">
    <property type="entry name" value="Cyanase"/>
</dbReference>
<dbReference type="InterPro" id="IPR003712">
    <property type="entry name" value="Cyanate_lyase_C"/>
</dbReference>
<dbReference type="InterPro" id="IPR036581">
    <property type="entry name" value="Cyanate_lyase_C_sf"/>
</dbReference>
<dbReference type="InterPro" id="IPR048564">
    <property type="entry name" value="CYNS_N"/>
</dbReference>
<dbReference type="InterPro" id="IPR010982">
    <property type="entry name" value="Lambda_DNA-bd_dom_sf"/>
</dbReference>
<dbReference type="NCBIfam" id="TIGR00673">
    <property type="entry name" value="cynS"/>
    <property type="match status" value="1"/>
</dbReference>
<dbReference type="NCBIfam" id="NF002773">
    <property type="entry name" value="PRK02866.1"/>
    <property type="match status" value="1"/>
</dbReference>
<dbReference type="PANTHER" id="PTHR34186">
    <property type="entry name" value="CYANATE HYDRATASE"/>
    <property type="match status" value="1"/>
</dbReference>
<dbReference type="PANTHER" id="PTHR34186:SF2">
    <property type="entry name" value="CYANATE HYDRATASE"/>
    <property type="match status" value="1"/>
</dbReference>
<dbReference type="Pfam" id="PF02560">
    <property type="entry name" value="Cyanate_lyase"/>
    <property type="match status" value="1"/>
</dbReference>
<dbReference type="Pfam" id="PF21291">
    <property type="entry name" value="CYNS_N"/>
    <property type="match status" value="1"/>
</dbReference>
<dbReference type="PIRSF" id="PIRSF001263">
    <property type="entry name" value="Cyanate_hydratas"/>
    <property type="match status" value="1"/>
</dbReference>
<dbReference type="PRINTS" id="PR01693">
    <property type="entry name" value="CYANASE"/>
</dbReference>
<dbReference type="SMART" id="SM01116">
    <property type="entry name" value="Cyanate_lyase"/>
    <property type="match status" value="1"/>
</dbReference>
<dbReference type="SUPFAM" id="SSF55234">
    <property type="entry name" value="Cyanase C-terminal domain"/>
    <property type="match status" value="1"/>
</dbReference>
<dbReference type="SUPFAM" id="SSF47413">
    <property type="entry name" value="lambda repressor-like DNA-binding domains"/>
    <property type="match status" value="1"/>
</dbReference>
<feature type="chain" id="PRO_1000128221" description="Cyanate hydratase">
    <location>
        <begin position="1"/>
        <end position="156"/>
    </location>
</feature>
<feature type="active site" evidence="1">
    <location>
        <position position="96"/>
    </location>
</feature>
<feature type="active site" evidence="1">
    <location>
        <position position="99"/>
    </location>
</feature>
<feature type="active site" evidence="1">
    <location>
        <position position="122"/>
    </location>
</feature>
<evidence type="ECO:0000255" key="1">
    <source>
        <dbReference type="HAMAP-Rule" id="MF_00535"/>
    </source>
</evidence>
<keyword id="KW-0456">Lyase</keyword>
<proteinExistence type="inferred from homology"/>
<sequence>MIQSQHSQTARHALAETVVLAKARKNLSFAQLTEGTGLSEAFVTAALLGQHALPADAARVVADKLGLDDDAVLLLQMIPLRGSIDDRVPTDPTIYRFYEMLQVYGTTLKALVHEKFGDGIISAINFRLDVKKVDDPEGGSRAVITLDGKYLPTKPF</sequence>
<reference key="1">
    <citation type="submission" date="2008-02" db="EMBL/GenBank/DDBJ databases">
        <title>Complete sequence of chromosome 2 of Burkholderia cenocepacia MC0-3.</title>
        <authorList>
            <person name="Copeland A."/>
            <person name="Lucas S."/>
            <person name="Lapidus A."/>
            <person name="Barry K."/>
            <person name="Bruce D."/>
            <person name="Goodwin L."/>
            <person name="Glavina del Rio T."/>
            <person name="Dalin E."/>
            <person name="Tice H."/>
            <person name="Pitluck S."/>
            <person name="Chain P."/>
            <person name="Malfatti S."/>
            <person name="Shin M."/>
            <person name="Vergez L."/>
            <person name="Schmutz J."/>
            <person name="Larimer F."/>
            <person name="Land M."/>
            <person name="Hauser L."/>
            <person name="Kyrpides N."/>
            <person name="Mikhailova N."/>
            <person name="Tiedje J."/>
            <person name="Richardson P."/>
        </authorList>
    </citation>
    <scope>NUCLEOTIDE SEQUENCE [LARGE SCALE GENOMIC DNA]</scope>
    <source>
        <strain>MC0-3</strain>
    </source>
</reference>
<protein>
    <recommendedName>
        <fullName evidence="1">Cyanate hydratase</fullName>
        <shortName evidence="1">Cyanase</shortName>
        <ecNumber evidence="1">4.2.1.104</ecNumber>
    </recommendedName>
    <alternativeName>
        <fullName evidence="1">Cyanate hydrolase</fullName>
    </alternativeName>
    <alternativeName>
        <fullName evidence="1">Cyanate lyase</fullName>
    </alternativeName>
</protein>
<accession>B1K759</accession>